<name>SYV_LACJO</name>
<proteinExistence type="inferred from homology"/>
<comment type="function">
    <text evidence="1">Catalyzes the attachment of valine to tRNA(Val). As ValRS can inadvertently accommodate and process structurally similar amino acids such as threonine, to avoid such errors, it has a 'posttransfer' editing activity that hydrolyzes mischarged Thr-tRNA(Val) in a tRNA-dependent manner.</text>
</comment>
<comment type="catalytic activity">
    <reaction evidence="1">
        <text>tRNA(Val) + L-valine + ATP = L-valyl-tRNA(Val) + AMP + diphosphate</text>
        <dbReference type="Rhea" id="RHEA:10704"/>
        <dbReference type="Rhea" id="RHEA-COMP:9672"/>
        <dbReference type="Rhea" id="RHEA-COMP:9708"/>
        <dbReference type="ChEBI" id="CHEBI:30616"/>
        <dbReference type="ChEBI" id="CHEBI:33019"/>
        <dbReference type="ChEBI" id="CHEBI:57762"/>
        <dbReference type="ChEBI" id="CHEBI:78442"/>
        <dbReference type="ChEBI" id="CHEBI:78537"/>
        <dbReference type="ChEBI" id="CHEBI:456215"/>
        <dbReference type="EC" id="6.1.1.9"/>
    </reaction>
</comment>
<comment type="subunit">
    <text evidence="1">Monomer.</text>
</comment>
<comment type="subcellular location">
    <subcellularLocation>
        <location evidence="1">Cytoplasm</location>
    </subcellularLocation>
</comment>
<comment type="domain">
    <text evidence="1">ValRS has two distinct active sites: one for aminoacylation and one for editing. The misactivated threonine is translocated from the active site to the editing site.</text>
</comment>
<comment type="domain">
    <text evidence="1">The C-terminal coiled-coil domain is crucial for aminoacylation activity.</text>
</comment>
<comment type="similarity">
    <text evidence="1">Belongs to the class-I aminoacyl-tRNA synthetase family. ValS type 1 subfamily.</text>
</comment>
<sequence length="879" mass="101244">MADLAPKYNPNEVEKGRYQEWLDEDLFKPSGDKKAHPYSIVIPPPNVTGKLHLGHAWDTAIQDTLIRFKRMQGYDTLYLPGMDHAGIATQAKVEAKLRTQGKDRHEMGREAFVKQVWDWKDEYASIIKSQWAKMGLSLDYSRERFTLDKGLSKAVRKVFVQLYNEGLIYRGEYIINWDPKLETALSDIEVIHKDDKGAFYHIKYPFADGSGFVEIATTRPETMFGDTAVAVAPGDERYKDIVGKELVLPLVGRHIPIIEDQHVDPEFGTGLVKITPAHDPNDFQVGNRHNLERINVMNDNGTMNEEAGKYAGMDRFEAREALVKDLKEEGFLIKVEPIVHSVGHSERSGVQVEPRLSKQWFVKMKPLAEKVLENQKTDDKVNFVPERFEHTLEQWMSDVHDWVISRQLWWGHRIPAWYNKKTGETYVGLEAPKDSENWEQDPDVLDTWFSSALWPFSTLGWPDENSEDFKRYFPTNTLVTGYDIIFFWVSRMIFQSLHFTGKRPFDDVVLHGLIRDPQGRKMSKSLGNGVDPMDVVDEYGADALRWFLLNGTAPGQDTRYDPKKMGAAWNFINKIWNASRFVIMNLPEDAKPAHMPDTSKFDLADSWIFDRLNHTVSEVTRLFDEYQFGEAGRELYNFIWNDFCDWYIEISKVALNGDDEELKTRKQENLIWILDQILRLLHPIMPFVTEKLWLSMPHDGKSIMVAKYPETHKEFENKEADSQMAFLIEVIKAVRNIRMEVNAPMSSPIDIMIQIDDDNNKAVLDNNAEYVENFLHPKALSVAADIEAPKLAKTAVIPGAQIFVPLTELVNVDEELAKMEKEEKRLEAEVERAEKKLSNQGFVAHAPEAVINKEKEKKADYESQLAGVRERMKELKESK</sequence>
<evidence type="ECO:0000255" key="1">
    <source>
        <dbReference type="HAMAP-Rule" id="MF_02004"/>
    </source>
</evidence>
<feature type="chain" id="PRO_0000224490" description="Valine--tRNA ligase">
    <location>
        <begin position="1"/>
        <end position="879"/>
    </location>
</feature>
<feature type="coiled-coil region" evidence="1">
    <location>
        <begin position="806"/>
        <end position="879"/>
    </location>
</feature>
<feature type="short sequence motif" description="'HIGH' region">
    <location>
        <begin position="45"/>
        <end position="55"/>
    </location>
</feature>
<feature type="short sequence motif" description="'KMSKS' region">
    <location>
        <begin position="521"/>
        <end position="525"/>
    </location>
</feature>
<feature type="binding site" evidence="1">
    <location>
        <position position="524"/>
    </location>
    <ligand>
        <name>ATP</name>
        <dbReference type="ChEBI" id="CHEBI:30616"/>
    </ligand>
</feature>
<protein>
    <recommendedName>
        <fullName evidence="1">Valine--tRNA ligase</fullName>
        <ecNumber evidence="1">6.1.1.9</ecNumber>
    </recommendedName>
    <alternativeName>
        <fullName evidence="1">Valyl-tRNA synthetase</fullName>
        <shortName evidence="1">ValRS</shortName>
    </alternativeName>
</protein>
<organism>
    <name type="scientific">Lactobacillus johnsonii (strain CNCM I-12250 / La1 / NCC 533)</name>
    <dbReference type="NCBI Taxonomy" id="257314"/>
    <lineage>
        <taxon>Bacteria</taxon>
        <taxon>Bacillati</taxon>
        <taxon>Bacillota</taxon>
        <taxon>Bacilli</taxon>
        <taxon>Lactobacillales</taxon>
        <taxon>Lactobacillaceae</taxon>
        <taxon>Lactobacillus</taxon>
    </lineage>
</organism>
<dbReference type="EC" id="6.1.1.9" evidence="1"/>
<dbReference type="EMBL" id="AE017198">
    <property type="protein sequence ID" value="AAS08779.1"/>
    <property type="molecule type" value="Genomic_DNA"/>
</dbReference>
<dbReference type="RefSeq" id="WP_011161834.1">
    <property type="nucleotide sequence ID" value="NC_005362.1"/>
</dbReference>
<dbReference type="SMR" id="Q74JZ8"/>
<dbReference type="KEGG" id="ljo:LJ_0958"/>
<dbReference type="eggNOG" id="COG0525">
    <property type="taxonomic scope" value="Bacteria"/>
</dbReference>
<dbReference type="HOGENOM" id="CLU_001493_0_2_9"/>
<dbReference type="Proteomes" id="UP000000581">
    <property type="component" value="Chromosome"/>
</dbReference>
<dbReference type="GO" id="GO:0005829">
    <property type="term" value="C:cytosol"/>
    <property type="evidence" value="ECO:0007669"/>
    <property type="project" value="TreeGrafter"/>
</dbReference>
<dbReference type="GO" id="GO:0002161">
    <property type="term" value="F:aminoacyl-tRNA deacylase activity"/>
    <property type="evidence" value="ECO:0007669"/>
    <property type="project" value="InterPro"/>
</dbReference>
<dbReference type="GO" id="GO:0005524">
    <property type="term" value="F:ATP binding"/>
    <property type="evidence" value="ECO:0007669"/>
    <property type="project" value="UniProtKB-UniRule"/>
</dbReference>
<dbReference type="GO" id="GO:0004832">
    <property type="term" value="F:valine-tRNA ligase activity"/>
    <property type="evidence" value="ECO:0007669"/>
    <property type="project" value="UniProtKB-UniRule"/>
</dbReference>
<dbReference type="GO" id="GO:0006438">
    <property type="term" value="P:valyl-tRNA aminoacylation"/>
    <property type="evidence" value="ECO:0007669"/>
    <property type="project" value="UniProtKB-UniRule"/>
</dbReference>
<dbReference type="CDD" id="cd07962">
    <property type="entry name" value="Anticodon_Ia_Val"/>
    <property type="match status" value="1"/>
</dbReference>
<dbReference type="CDD" id="cd00817">
    <property type="entry name" value="ValRS_core"/>
    <property type="match status" value="1"/>
</dbReference>
<dbReference type="FunFam" id="1.10.287.380:FF:000001">
    <property type="entry name" value="Valine--tRNA ligase"/>
    <property type="match status" value="1"/>
</dbReference>
<dbReference type="FunFam" id="1.10.730.10:FF:000014">
    <property type="entry name" value="Valine--tRNA ligase"/>
    <property type="match status" value="1"/>
</dbReference>
<dbReference type="FunFam" id="3.40.50.620:FF:000032">
    <property type="entry name" value="Valine--tRNA ligase"/>
    <property type="match status" value="1"/>
</dbReference>
<dbReference type="FunFam" id="3.40.50.620:FF:000098">
    <property type="entry name" value="Valine--tRNA ligase"/>
    <property type="match status" value="1"/>
</dbReference>
<dbReference type="FunFam" id="3.90.740.10:FF:000005">
    <property type="entry name" value="Valine--tRNA ligase, mitochondrial"/>
    <property type="match status" value="1"/>
</dbReference>
<dbReference type="Gene3D" id="3.40.50.620">
    <property type="entry name" value="HUPs"/>
    <property type="match status" value="3"/>
</dbReference>
<dbReference type="Gene3D" id="1.10.730.10">
    <property type="entry name" value="Isoleucyl-tRNA Synthetase, Domain 1"/>
    <property type="match status" value="1"/>
</dbReference>
<dbReference type="Gene3D" id="1.10.287.380">
    <property type="entry name" value="Valyl-tRNA synthetase, C-terminal domain"/>
    <property type="match status" value="1"/>
</dbReference>
<dbReference type="Gene3D" id="3.90.740.10">
    <property type="entry name" value="Valyl/Leucyl/Isoleucyl-tRNA synthetase, editing domain"/>
    <property type="match status" value="1"/>
</dbReference>
<dbReference type="HAMAP" id="MF_02004">
    <property type="entry name" value="Val_tRNA_synth_type1"/>
    <property type="match status" value="1"/>
</dbReference>
<dbReference type="InterPro" id="IPR001412">
    <property type="entry name" value="aa-tRNA-synth_I_CS"/>
</dbReference>
<dbReference type="InterPro" id="IPR002300">
    <property type="entry name" value="aa-tRNA-synth_Ia"/>
</dbReference>
<dbReference type="InterPro" id="IPR033705">
    <property type="entry name" value="Anticodon_Ia_Val"/>
</dbReference>
<dbReference type="InterPro" id="IPR013155">
    <property type="entry name" value="M/V/L/I-tRNA-synth_anticd-bd"/>
</dbReference>
<dbReference type="InterPro" id="IPR014729">
    <property type="entry name" value="Rossmann-like_a/b/a_fold"/>
</dbReference>
<dbReference type="InterPro" id="IPR010978">
    <property type="entry name" value="tRNA-bd_arm"/>
</dbReference>
<dbReference type="InterPro" id="IPR009080">
    <property type="entry name" value="tRNAsynth_Ia_anticodon-bd"/>
</dbReference>
<dbReference type="InterPro" id="IPR037118">
    <property type="entry name" value="Val-tRNA_synth_C_sf"/>
</dbReference>
<dbReference type="InterPro" id="IPR019499">
    <property type="entry name" value="Val-tRNA_synth_tRNA-bd"/>
</dbReference>
<dbReference type="InterPro" id="IPR009008">
    <property type="entry name" value="Val/Leu/Ile-tRNA-synth_edit"/>
</dbReference>
<dbReference type="InterPro" id="IPR002303">
    <property type="entry name" value="Valyl-tRNA_ligase"/>
</dbReference>
<dbReference type="NCBIfam" id="NF004349">
    <property type="entry name" value="PRK05729.1"/>
    <property type="match status" value="1"/>
</dbReference>
<dbReference type="NCBIfam" id="TIGR00422">
    <property type="entry name" value="valS"/>
    <property type="match status" value="1"/>
</dbReference>
<dbReference type="PANTHER" id="PTHR11946:SF93">
    <property type="entry name" value="VALINE--TRNA LIGASE, CHLOROPLASTIC_MITOCHONDRIAL 2"/>
    <property type="match status" value="1"/>
</dbReference>
<dbReference type="PANTHER" id="PTHR11946">
    <property type="entry name" value="VALYL-TRNA SYNTHETASES"/>
    <property type="match status" value="1"/>
</dbReference>
<dbReference type="Pfam" id="PF08264">
    <property type="entry name" value="Anticodon_1"/>
    <property type="match status" value="1"/>
</dbReference>
<dbReference type="Pfam" id="PF00133">
    <property type="entry name" value="tRNA-synt_1"/>
    <property type="match status" value="1"/>
</dbReference>
<dbReference type="Pfam" id="PF10458">
    <property type="entry name" value="Val_tRNA-synt_C"/>
    <property type="match status" value="1"/>
</dbReference>
<dbReference type="PRINTS" id="PR00986">
    <property type="entry name" value="TRNASYNTHVAL"/>
</dbReference>
<dbReference type="SUPFAM" id="SSF47323">
    <property type="entry name" value="Anticodon-binding domain of a subclass of class I aminoacyl-tRNA synthetases"/>
    <property type="match status" value="1"/>
</dbReference>
<dbReference type="SUPFAM" id="SSF52374">
    <property type="entry name" value="Nucleotidylyl transferase"/>
    <property type="match status" value="1"/>
</dbReference>
<dbReference type="SUPFAM" id="SSF46589">
    <property type="entry name" value="tRNA-binding arm"/>
    <property type="match status" value="1"/>
</dbReference>
<dbReference type="SUPFAM" id="SSF50677">
    <property type="entry name" value="ValRS/IleRS/LeuRS editing domain"/>
    <property type="match status" value="1"/>
</dbReference>
<dbReference type="PROSITE" id="PS00178">
    <property type="entry name" value="AA_TRNA_LIGASE_I"/>
    <property type="match status" value="1"/>
</dbReference>
<gene>
    <name evidence="1" type="primary">valS</name>
    <name type="ordered locus">LJ_0958</name>
</gene>
<reference key="1">
    <citation type="journal article" date="2004" name="Proc. Natl. Acad. Sci. U.S.A.">
        <title>The genome sequence of the probiotic intestinal bacterium Lactobacillus johnsonii NCC 533.</title>
        <authorList>
            <person name="Pridmore R.D."/>
            <person name="Berger B."/>
            <person name="Desiere F."/>
            <person name="Vilanova D."/>
            <person name="Barretto C."/>
            <person name="Pittet A.-C."/>
            <person name="Zwahlen M.-C."/>
            <person name="Rouvet M."/>
            <person name="Altermann E."/>
            <person name="Barrangou R."/>
            <person name="Mollet B."/>
            <person name="Mercenier A."/>
            <person name="Klaenhammer T."/>
            <person name="Arigoni F."/>
            <person name="Schell M.A."/>
        </authorList>
    </citation>
    <scope>NUCLEOTIDE SEQUENCE [LARGE SCALE GENOMIC DNA]</scope>
    <source>
        <strain>CNCM I-1225 / La1 / NCC 533</strain>
    </source>
</reference>
<accession>Q74JZ8</accession>
<keyword id="KW-0030">Aminoacyl-tRNA synthetase</keyword>
<keyword id="KW-0067">ATP-binding</keyword>
<keyword id="KW-0175">Coiled coil</keyword>
<keyword id="KW-0963">Cytoplasm</keyword>
<keyword id="KW-0436">Ligase</keyword>
<keyword id="KW-0547">Nucleotide-binding</keyword>
<keyword id="KW-0648">Protein biosynthesis</keyword>